<name>CYPC_STRCN</name>
<sequence>MAGHTENEITIAAPVDLVWDMTNDLERWPELFSEYASCEVLSREANTVTFRLTMHPDENGKVWSWVSERTADREKLVVRARRVETGPFEYMNIVWEYEETPDGTRMHWTQDFAMKPDAPVDDAGMTDIINRNSPIQMALIRDRIEEVSCTTP</sequence>
<dbReference type="EMBL" id="X62518">
    <property type="protein sequence ID" value="CAA44383.1"/>
    <property type="molecule type" value="Genomic_DNA"/>
</dbReference>
<dbReference type="PIR" id="JC1215">
    <property type="entry name" value="JC1215"/>
</dbReference>
<dbReference type="SMR" id="Q02572"/>
<dbReference type="UniPathway" id="UPA00176"/>
<dbReference type="GO" id="GO:0017000">
    <property type="term" value="P:antibiotic biosynthetic process"/>
    <property type="evidence" value="ECO:0007669"/>
    <property type="project" value="UniProtKB-KW"/>
</dbReference>
<dbReference type="CDD" id="cd08860">
    <property type="entry name" value="TcmN_ARO-CYC_like"/>
    <property type="match status" value="1"/>
</dbReference>
<dbReference type="Gene3D" id="3.30.530.20">
    <property type="match status" value="1"/>
</dbReference>
<dbReference type="InterPro" id="IPR005031">
    <property type="entry name" value="COQ10_START"/>
</dbReference>
<dbReference type="InterPro" id="IPR023393">
    <property type="entry name" value="START-like_dom_sf"/>
</dbReference>
<dbReference type="Pfam" id="PF03364">
    <property type="entry name" value="Polyketide_cyc"/>
    <property type="match status" value="1"/>
</dbReference>
<dbReference type="SUPFAM" id="SSF55961">
    <property type="entry name" value="Bet v1-like"/>
    <property type="match status" value="1"/>
</dbReference>
<gene>
    <name type="primary">curF</name>
</gene>
<protein>
    <recommendedName>
        <fullName>Putative polyketide cyclase</fullName>
    </recommendedName>
</protein>
<keyword id="KW-0045">Antibiotic biosynthesis</keyword>
<feature type="chain" id="PRO_0000079756" description="Putative polyketide cyclase">
    <location>
        <begin position="1"/>
        <end position="152"/>
    </location>
</feature>
<reference key="1">
    <citation type="journal article" date="1992" name="Gene">
        <title>Analysis of a polyketide synthesis-encoding gene cluster of Streptomyces curacoi.</title>
        <authorList>
            <person name="Bergh S."/>
            <person name="Uhlen M."/>
        </authorList>
    </citation>
    <scope>NUCLEOTIDE SEQUENCE [GENOMIC DNA]</scope>
    <source>
        <strain>ATCC 13385 / CBS 484.68 / DSM 40107 / JCM 4219 / NBRC 12761 / NRRL B-2901 / VKM Ac-621</strain>
    </source>
</reference>
<comment type="pathway">
    <text>Antibiotic biosynthesis; curamycin biosynthesis.</text>
</comment>
<comment type="similarity">
    <text evidence="1">To polyketide cyclases.</text>
</comment>
<organism>
    <name type="scientific">Streptomyces cyaneus</name>
    <name type="common">Streptomyces curacoi</name>
    <dbReference type="NCBI Taxonomy" id="1904"/>
    <lineage>
        <taxon>Bacteria</taxon>
        <taxon>Bacillati</taxon>
        <taxon>Actinomycetota</taxon>
        <taxon>Actinomycetes</taxon>
        <taxon>Kitasatosporales</taxon>
        <taxon>Streptomycetaceae</taxon>
        <taxon>Streptomyces</taxon>
    </lineage>
</organism>
<accession>Q02572</accession>
<evidence type="ECO:0000305" key="1"/>
<proteinExistence type="predicted"/>